<protein>
    <recommendedName>
        <fullName evidence="5">Transcriptional regulator calD</fullName>
    </recommendedName>
    <alternativeName>
        <fullName evidence="5">Calbistrin biosynthesis cluster protein D</fullName>
    </alternativeName>
</protein>
<dbReference type="EMBL" id="MDYL01000013">
    <property type="protein sequence ID" value="OQD73799.1"/>
    <property type="molecule type" value="Genomic_DNA"/>
</dbReference>
<dbReference type="SMR" id="A0A1V6P9U2"/>
<dbReference type="STRING" id="69771.A0A1V6P9U2"/>
<dbReference type="OMA" id="DVPEFWG"/>
<dbReference type="OrthoDB" id="21502at2759"/>
<dbReference type="Proteomes" id="UP000191522">
    <property type="component" value="Unassembled WGS sequence"/>
</dbReference>
<dbReference type="GO" id="GO:0005634">
    <property type="term" value="C:nucleus"/>
    <property type="evidence" value="ECO:0007669"/>
    <property type="project" value="UniProtKB-SubCell"/>
</dbReference>
<dbReference type="Gene3D" id="3.30.559.10">
    <property type="entry name" value="Chloramphenicol acetyltransferase-like domain"/>
    <property type="match status" value="2"/>
</dbReference>
<dbReference type="InterPro" id="IPR023213">
    <property type="entry name" value="CAT-like_dom_sf"/>
</dbReference>
<proteinExistence type="evidence at protein level"/>
<feature type="chain" id="PRO_0000446489" description="Transcriptional regulator calD">
    <location>
        <begin position="1"/>
        <end position="494"/>
    </location>
</feature>
<sequence>MFGLFRSKAPEAPPKHPTDTIIPLNAADDTEVLRSVVVVLSYRFDDVLDPVKLKSSFEKLLDRPGWRKIGARLRLNDNGRLEYHIPERYDEKRPIVTWSHVSHNVSVLKHPLSSKLPRASARPAVVGDPNDFDELTSSPEAPKTLHDYLTRDVPQLCLHVVSFTDSTLVSISLPHTLTDGTGGAQIYRCWALVLQDRDDEVPPFHGYDSDPLATFGETSSQPYMYDPKLLTGWRKWLFILYQVYDGWRYRTSSRIVCVPGPYLAAQRKKAIEEIRAETGNDKAFVSDNDVLTAWFTRLAVGHYPRNSNLTVRIMNAFALASVLGNDRLPSTKAFISNAATEIYTFLSVRDFFTKPLSYAAYAIRRSMMEGGTREQVEALQAVKKQTLAREGHTWPIFGDASMEMMSYSNWTKGKYFETDFSAAIVKEGFAREARAEKPGFASMVQFNAWSTKFDLRNLMPIMGKDAAGNYWLQGPLRDVVWKRIEKELREEPLQ</sequence>
<evidence type="ECO:0000250" key="1">
    <source>
        <dbReference type="UniProtKB" id="A0A1B4XBK2"/>
    </source>
</evidence>
<evidence type="ECO:0000269" key="2">
    <source>
    </source>
</evidence>
<evidence type="ECO:0000269" key="3">
    <source>
    </source>
</evidence>
<evidence type="ECO:0000269" key="4">
    <source>
    </source>
</evidence>
<evidence type="ECO:0000303" key="5">
    <source>
    </source>
</evidence>
<evidence type="ECO:0000305" key="6"/>
<reference key="1">
    <citation type="journal article" date="2017" name="Nat. Microbiol.">
        <title>Global analysis of biosynthetic gene clusters reveals vast potential of secondary metabolite production in Penicillium species.</title>
        <authorList>
            <person name="Nielsen J.C."/>
            <person name="Grijseels S."/>
            <person name="Prigent S."/>
            <person name="Ji B."/>
            <person name="Dainat J."/>
            <person name="Nielsen K.F."/>
            <person name="Frisvad J.C."/>
            <person name="Workman M."/>
            <person name="Nielsen J."/>
        </authorList>
    </citation>
    <scope>NUCLEOTIDE SEQUENCE [LARGE SCALE GENOMIC DNA]</scope>
    <source>
        <strain>IBT 11843</strain>
    </source>
</reference>
<reference key="2">
    <citation type="journal article" date="1993" name="J. Antibiot.">
        <title>Calbistrins, novel antifungal agents produced by Penicillium restrictum. I. Production, taxonomy of the producing organism and biological activity.</title>
        <authorList>
            <person name="Jackson M."/>
            <person name="Karwowski J.P."/>
            <person name="Humphrey P.E."/>
            <person name="Kohl W.L."/>
            <person name="Barlow G.J."/>
            <person name="Tanaka S.K."/>
        </authorList>
    </citation>
    <scope>BIOTECHNOLOGY</scope>
</reference>
<reference key="3">
    <citation type="journal article" date="2013" name="Molecules">
        <title>Bio-activity and dereplication-based discovery of ophiobolins and other fungal secondary metabolites targeting leukemia cells.</title>
        <authorList>
            <person name="Bladt T.T."/>
            <person name="Duerr C."/>
            <person name="Knudsen P.B."/>
            <person name="Kildgaard S."/>
            <person name="Frisvad J.C."/>
            <person name="Gotfredsen C.H."/>
            <person name="Seiffert M."/>
            <person name="Larsen T.O."/>
        </authorList>
    </citation>
    <scope>BIOTECHNOLOGY</scope>
</reference>
<reference key="4">
    <citation type="journal article" date="2018" name="Fungal Biol. Biotechnol.">
        <title>Identification of the decumbenone biosynthetic gene cluster in Penicillium decumbens and the importance for production of calbistrin.</title>
        <authorList>
            <person name="Grijseels S."/>
            <person name="Pohl C."/>
            <person name="Nielsen J.C."/>
            <person name="Wasil Z."/>
            <person name="Nygaard Y."/>
            <person name="Nielsen J."/>
            <person name="Frisvad J.C."/>
            <person name="Nielsen K.F."/>
            <person name="Workman M."/>
            <person name="Larsen T.O."/>
            <person name="Driessen A.J.M."/>
            <person name="Frandsen R.J.N."/>
        </authorList>
    </citation>
    <scope>IDENTIFICATION</scope>
    <scope>INDUCTION</scope>
</reference>
<keyword id="KW-0539">Nucleus</keyword>
<keyword id="KW-1185">Reference proteome</keyword>
<keyword id="KW-0804">Transcription</keyword>
<keyword id="KW-0805">Transcription regulation</keyword>
<accession>A0A1V6P9U2</accession>
<comment type="function">
    <text evidence="1">Transcription co-regulator that might be involved in the regulation of the expression of the gene cluster that mediates the biosynthesis of calbistrins and related compounds such as decumbenones. Calbistrin A is a secondary metabolite with an interesting structure that was recently found to have bioactivity against leukemia cells. It consists of two polyketides linked by an ester bond: a bicyclic decalin containing polyketide and a linear 12 carbon dioic acid structure.</text>
</comment>
<comment type="subcellular location">
    <subcellularLocation>
        <location evidence="6">Nucleus</location>
    </subcellularLocation>
</comment>
<comment type="induction">
    <text evidence="3">Expression is induced in complex medium (Czapek yeast autolysate medium) supporting calbistrin production.</text>
</comment>
<comment type="biotechnology">
    <text evidence="2 4">Calbistrin A has been reported to possess a number of interesting bioactivities including antifungal active against Candida albicans and cytotoxic toward both healthy and leukemic human cells.</text>
</comment>
<name>CALD_PENDC</name>
<organism>
    <name type="scientific">Penicillium decumbens</name>
    <dbReference type="NCBI Taxonomy" id="69771"/>
    <lineage>
        <taxon>Eukaryota</taxon>
        <taxon>Fungi</taxon>
        <taxon>Dikarya</taxon>
        <taxon>Ascomycota</taxon>
        <taxon>Pezizomycotina</taxon>
        <taxon>Eurotiomycetes</taxon>
        <taxon>Eurotiomycetidae</taxon>
        <taxon>Eurotiales</taxon>
        <taxon>Aspergillaceae</taxon>
        <taxon>Penicillium</taxon>
    </lineage>
</organism>
<gene>
    <name evidence="5" type="primary">calD</name>
    <name type="ORF">PENDEC_c013G04601</name>
</gene>